<proteinExistence type="inferred from homology"/>
<accession>Q5DYF2</accession>
<organism>
    <name type="scientific">Aliivibrio fischeri (strain ATCC 700601 / ES114)</name>
    <name type="common">Vibrio fischeri</name>
    <dbReference type="NCBI Taxonomy" id="312309"/>
    <lineage>
        <taxon>Bacteria</taxon>
        <taxon>Pseudomonadati</taxon>
        <taxon>Pseudomonadota</taxon>
        <taxon>Gammaproteobacteria</taxon>
        <taxon>Vibrionales</taxon>
        <taxon>Vibrionaceae</taxon>
        <taxon>Aliivibrio</taxon>
    </lineage>
</organism>
<gene>
    <name evidence="1" type="primary">ectC</name>
    <name type="ordered locus">VF_A1124</name>
</gene>
<keyword id="KW-0456">Lyase</keyword>
<keyword id="KW-1185">Reference proteome</keyword>
<evidence type="ECO:0000255" key="1">
    <source>
        <dbReference type="HAMAP-Rule" id="MF_01255"/>
    </source>
</evidence>
<protein>
    <recommendedName>
        <fullName evidence="1">L-ectoine synthase</fullName>
        <ecNumber evidence="1">4.2.1.108</ecNumber>
    </recommendedName>
    <alternativeName>
        <fullName evidence="1">N-acetyldiaminobutyrate dehydratase</fullName>
    </alternativeName>
</protein>
<name>ECTC_ALIF1</name>
<comment type="function">
    <text evidence="1">Catalyzes the circularization of gamma-N-acetyl-alpha,gamma-diaminobutyric acid (ADABA) to ectoine (1,4,5,6-tetrahydro-2-methyl-4-pyrimidine carboxylic acid), which is an excellent osmoprotectant.</text>
</comment>
<comment type="catalytic activity">
    <reaction evidence="1">
        <text>(2S)-4-acetamido-2-aminobutanoate = L-ectoine + H2O</text>
        <dbReference type="Rhea" id="RHEA:17281"/>
        <dbReference type="ChEBI" id="CHEBI:15377"/>
        <dbReference type="ChEBI" id="CHEBI:58515"/>
        <dbReference type="ChEBI" id="CHEBI:58929"/>
        <dbReference type="EC" id="4.2.1.108"/>
    </reaction>
</comment>
<comment type="pathway">
    <text evidence="1">Amine and polyamine biosynthesis; ectoine biosynthesis; L-ectoine from L-aspartate 4-semialdehyde: step 3/3.</text>
</comment>
<comment type="similarity">
    <text evidence="1">Belongs to the ectoine synthase family.</text>
</comment>
<sequence>MIVRTLDECRDSERRVASETWESVRMLLKNDNMGFSFHITTIYQDTETHIHYKNHLESVYCMSGEGEIEVVGGETYPIKPGTLYILDKHDEHYLRAYKDKEMVMACVFNPPITGAEVHDENGVYPVLD</sequence>
<feature type="chain" id="PRO_1000067241" description="L-ectoine synthase">
    <location>
        <begin position="1"/>
        <end position="128"/>
    </location>
</feature>
<dbReference type="EC" id="4.2.1.108" evidence="1"/>
<dbReference type="EMBL" id="CP000021">
    <property type="protein sequence ID" value="AAW88194.1"/>
    <property type="molecule type" value="Genomic_DNA"/>
</dbReference>
<dbReference type="RefSeq" id="WP_005423821.1">
    <property type="nucleotide sequence ID" value="NC_006841.2"/>
</dbReference>
<dbReference type="RefSeq" id="YP_207082.1">
    <property type="nucleotide sequence ID" value="NC_006841.2"/>
</dbReference>
<dbReference type="SMR" id="Q5DYF2"/>
<dbReference type="STRING" id="312309.VF_A1124"/>
<dbReference type="EnsemblBacteria" id="AAW88194">
    <property type="protein sequence ID" value="AAW88194"/>
    <property type="gene ID" value="VF_A1124"/>
</dbReference>
<dbReference type="GeneID" id="54166446"/>
<dbReference type="KEGG" id="vfi:VF_A1124"/>
<dbReference type="PATRIC" id="fig|312309.11.peg.3724"/>
<dbReference type="eggNOG" id="COG0662">
    <property type="taxonomic scope" value="Bacteria"/>
</dbReference>
<dbReference type="HOGENOM" id="CLU_154525_0_0_6"/>
<dbReference type="OrthoDB" id="9801830at2"/>
<dbReference type="UniPathway" id="UPA00067">
    <property type="reaction ID" value="UER00123"/>
</dbReference>
<dbReference type="Proteomes" id="UP000000537">
    <property type="component" value="Chromosome II"/>
</dbReference>
<dbReference type="GO" id="GO:0033990">
    <property type="term" value="F:ectoine synthase activity"/>
    <property type="evidence" value="ECO:0007669"/>
    <property type="project" value="UniProtKB-EC"/>
</dbReference>
<dbReference type="GO" id="GO:0019491">
    <property type="term" value="P:ectoine biosynthetic process"/>
    <property type="evidence" value="ECO:0007669"/>
    <property type="project" value="UniProtKB-UniRule"/>
</dbReference>
<dbReference type="CDD" id="cd06978">
    <property type="entry name" value="cupin_EctC"/>
    <property type="match status" value="1"/>
</dbReference>
<dbReference type="Gene3D" id="2.60.120.10">
    <property type="entry name" value="Jelly Rolls"/>
    <property type="match status" value="1"/>
</dbReference>
<dbReference type="HAMAP" id="MF_01255">
    <property type="entry name" value="Ectoine_synth"/>
    <property type="match status" value="1"/>
</dbReference>
<dbReference type="InterPro" id="IPR010462">
    <property type="entry name" value="Ectoine_synth"/>
</dbReference>
<dbReference type="InterPro" id="IPR014710">
    <property type="entry name" value="RmlC-like_jellyroll"/>
</dbReference>
<dbReference type="InterPro" id="IPR011051">
    <property type="entry name" value="RmlC_Cupin_sf"/>
</dbReference>
<dbReference type="NCBIfam" id="NF009806">
    <property type="entry name" value="PRK13290.1"/>
    <property type="match status" value="1"/>
</dbReference>
<dbReference type="PANTHER" id="PTHR39289">
    <property type="match status" value="1"/>
</dbReference>
<dbReference type="PANTHER" id="PTHR39289:SF1">
    <property type="entry name" value="L-ECTOINE SYNTHASE"/>
    <property type="match status" value="1"/>
</dbReference>
<dbReference type="Pfam" id="PF06339">
    <property type="entry name" value="Ectoine_synth"/>
    <property type="match status" value="1"/>
</dbReference>
<dbReference type="SUPFAM" id="SSF51182">
    <property type="entry name" value="RmlC-like cupins"/>
    <property type="match status" value="1"/>
</dbReference>
<reference key="1">
    <citation type="journal article" date="2005" name="Proc. Natl. Acad. Sci. U.S.A.">
        <title>Complete genome sequence of Vibrio fischeri: a symbiotic bacterium with pathogenic congeners.</title>
        <authorList>
            <person name="Ruby E.G."/>
            <person name="Urbanowski M."/>
            <person name="Campbell J."/>
            <person name="Dunn A."/>
            <person name="Faini M."/>
            <person name="Gunsalus R."/>
            <person name="Lostroh P."/>
            <person name="Lupp C."/>
            <person name="McCann J."/>
            <person name="Millikan D."/>
            <person name="Schaefer A."/>
            <person name="Stabb E."/>
            <person name="Stevens A."/>
            <person name="Visick K."/>
            <person name="Whistler C."/>
            <person name="Greenberg E.P."/>
        </authorList>
    </citation>
    <scope>NUCLEOTIDE SEQUENCE [LARGE SCALE GENOMIC DNA]</scope>
    <source>
        <strain>ATCC 700601 / ES114</strain>
    </source>
</reference>